<proteinExistence type="inferred from homology"/>
<dbReference type="EC" id="5.4.99.25" evidence="1"/>
<dbReference type="EMBL" id="CP000507">
    <property type="protein sequence ID" value="ABL99170.1"/>
    <property type="molecule type" value="Genomic_DNA"/>
</dbReference>
<dbReference type="RefSeq" id="WP_011759079.1">
    <property type="nucleotide sequence ID" value="NC_008700.1"/>
</dbReference>
<dbReference type="SMR" id="A1S464"/>
<dbReference type="STRING" id="326297.Sama_0963"/>
<dbReference type="KEGG" id="saz:Sama_0963"/>
<dbReference type="eggNOG" id="COG0130">
    <property type="taxonomic scope" value="Bacteria"/>
</dbReference>
<dbReference type="HOGENOM" id="CLU_032087_0_3_6"/>
<dbReference type="OrthoDB" id="9802309at2"/>
<dbReference type="Proteomes" id="UP000009175">
    <property type="component" value="Chromosome"/>
</dbReference>
<dbReference type="GO" id="GO:0003723">
    <property type="term" value="F:RNA binding"/>
    <property type="evidence" value="ECO:0007669"/>
    <property type="project" value="InterPro"/>
</dbReference>
<dbReference type="GO" id="GO:0160148">
    <property type="term" value="F:tRNA pseudouridine(55) synthase activity"/>
    <property type="evidence" value="ECO:0007669"/>
    <property type="project" value="UniProtKB-EC"/>
</dbReference>
<dbReference type="GO" id="GO:1990481">
    <property type="term" value="P:mRNA pseudouridine synthesis"/>
    <property type="evidence" value="ECO:0007669"/>
    <property type="project" value="TreeGrafter"/>
</dbReference>
<dbReference type="GO" id="GO:0031119">
    <property type="term" value="P:tRNA pseudouridine synthesis"/>
    <property type="evidence" value="ECO:0007669"/>
    <property type="project" value="UniProtKB-UniRule"/>
</dbReference>
<dbReference type="CDD" id="cd02573">
    <property type="entry name" value="PseudoU_synth_EcTruB"/>
    <property type="match status" value="1"/>
</dbReference>
<dbReference type="CDD" id="cd21152">
    <property type="entry name" value="PUA_TruB_bacterial"/>
    <property type="match status" value="1"/>
</dbReference>
<dbReference type="FunFam" id="2.30.130.10:FF:000004">
    <property type="entry name" value="tRNA pseudouridine synthase B"/>
    <property type="match status" value="1"/>
</dbReference>
<dbReference type="FunFam" id="3.30.2350.10:FF:000003">
    <property type="entry name" value="tRNA pseudouridine synthase B"/>
    <property type="match status" value="1"/>
</dbReference>
<dbReference type="Gene3D" id="3.30.2350.10">
    <property type="entry name" value="Pseudouridine synthase"/>
    <property type="match status" value="1"/>
</dbReference>
<dbReference type="Gene3D" id="2.30.130.10">
    <property type="entry name" value="PUA domain"/>
    <property type="match status" value="1"/>
</dbReference>
<dbReference type="HAMAP" id="MF_01080">
    <property type="entry name" value="TruB_bact"/>
    <property type="match status" value="1"/>
</dbReference>
<dbReference type="InterPro" id="IPR020103">
    <property type="entry name" value="PsdUridine_synth_cat_dom_sf"/>
</dbReference>
<dbReference type="InterPro" id="IPR002501">
    <property type="entry name" value="PsdUridine_synth_N"/>
</dbReference>
<dbReference type="InterPro" id="IPR015947">
    <property type="entry name" value="PUA-like_sf"/>
</dbReference>
<dbReference type="InterPro" id="IPR036974">
    <property type="entry name" value="PUA_sf"/>
</dbReference>
<dbReference type="InterPro" id="IPR014780">
    <property type="entry name" value="tRNA_psdUridine_synth_TruB"/>
</dbReference>
<dbReference type="InterPro" id="IPR015240">
    <property type="entry name" value="tRNA_sdUridine_synth_fam1_C"/>
</dbReference>
<dbReference type="InterPro" id="IPR032819">
    <property type="entry name" value="TruB_C"/>
</dbReference>
<dbReference type="NCBIfam" id="TIGR00431">
    <property type="entry name" value="TruB"/>
    <property type="match status" value="1"/>
</dbReference>
<dbReference type="PANTHER" id="PTHR13767:SF2">
    <property type="entry name" value="PSEUDOURIDYLATE SYNTHASE TRUB1"/>
    <property type="match status" value="1"/>
</dbReference>
<dbReference type="PANTHER" id="PTHR13767">
    <property type="entry name" value="TRNA-PSEUDOURIDINE SYNTHASE"/>
    <property type="match status" value="1"/>
</dbReference>
<dbReference type="Pfam" id="PF09157">
    <property type="entry name" value="TruB-C_2"/>
    <property type="match status" value="1"/>
</dbReference>
<dbReference type="Pfam" id="PF16198">
    <property type="entry name" value="TruB_C_2"/>
    <property type="match status" value="1"/>
</dbReference>
<dbReference type="Pfam" id="PF01509">
    <property type="entry name" value="TruB_N"/>
    <property type="match status" value="1"/>
</dbReference>
<dbReference type="SUPFAM" id="SSF55120">
    <property type="entry name" value="Pseudouridine synthase"/>
    <property type="match status" value="1"/>
</dbReference>
<dbReference type="SUPFAM" id="SSF88697">
    <property type="entry name" value="PUA domain-like"/>
    <property type="match status" value="1"/>
</dbReference>
<feature type="chain" id="PRO_1000084669" description="tRNA pseudouridine synthase B">
    <location>
        <begin position="1"/>
        <end position="315"/>
    </location>
</feature>
<feature type="active site" description="Nucleophile" evidence="1">
    <location>
        <position position="47"/>
    </location>
</feature>
<gene>
    <name evidence="1" type="primary">truB</name>
    <name type="ordered locus">Sama_0963</name>
</gene>
<sequence>MARRTKGRNIDGIVLLDKPTGMSSNHALQRVKRIYNASKAGHTGALDPLATGMLPVCLGEATKFSQHLLDADKRYLVTAKLGQRTDTSDSDGEVVSERPLNFTQEALDAALDSFRGDTLQVPSMFSALKYQGQPLYKYAREGKEVPREARPITVFELNFIKLEGDELTLDIHCSKGTYIRTIIDDLGEKLGCGAHVIMLRRTAVAGYPYERMVTIEALEALLEQAEKEGVEPKTLLDPLLLPMDTAVANFPEVNIPDAVAPYLMNGNPVRVAGVSSDSLLRITLGEARRFVGVGAINDDGLLAPKRLVVFYDDEA</sequence>
<protein>
    <recommendedName>
        <fullName evidence="1">tRNA pseudouridine synthase B</fullName>
        <ecNumber evidence="1">5.4.99.25</ecNumber>
    </recommendedName>
    <alternativeName>
        <fullName evidence="1">tRNA pseudouridine(55) synthase</fullName>
        <shortName evidence="1">Psi55 synthase</shortName>
    </alternativeName>
    <alternativeName>
        <fullName evidence="1">tRNA pseudouridylate synthase</fullName>
    </alternativeName>
    <alternativeName>
        <fullName evidence="1">tRNA-uridine isomerase</fullName>
    </alternativeName>
</protein>
<reference key="1">
    <citation type="submission" date="2006-12" db="EMBL/GenBank/DDBJ databases">
        <title>Complete sequence of Shewanella amazonensis SB2B.</title>
        <authorList>
            <consortium name="US DOE Joint Genome Institute"/>
            <person name="Copeland A."/>
            <person name="Lucas S."/>
            <person name="Lapidus A."/>
            <person name="Barry K."/>
            <person name="Detter J.C."/>
            <person name="Glavina del Rio T."/>
            <person name="Hammon N."/>
            <person name="Israni S."/>
            <person name="Dalin E."/>
            <person name="Tice H."/>
            <person name="Pitluck S."/>
            <person name="Munk A.C."/>
            <person name="Brettin T."/>
            <person name="Bruce D."/>
            <person name="Han C."/>
            <person name="Tapia R."/>
            <person name="Gilna P."/>
            <person name="Schmutz J."/>
            <person name="Larimer F."/>
            <person name="Land M."/>
            <person name="Hauser L."/>
            <person name="Kyrpides N."/>
            <person name="Mikhailova N."/>
            <person name="Fredrickson J."/>
            <person name="Richardson P."/>
        </authorList>
    </citation>
    <scope>NUCLEOTIDE SEQUENCE [LARGE SCALE GENOMIC DNA]</scope>
    <source>
        <strain>ATCC BAA-1098 / SB2B</strain>
    </source>
</reference>
<evidence type="ECO:0000255" key="1">
    <source>
        <dbReference type="HAMAP-Rule" id="MF_01080"/>
    </source>
</evidence>
<comment type="function">
    <text evidence="1">Responsible for synthesis of pseudouridine from uracil-55 in the psi GC loop of transfer RNAs.</text>
</comment>
<comment type="catalytic activity">
    <reaction evidence="1">
        <text>uridine(55) in tRNA = pseudouridine(55) in tRNA</text>
        <dbReference type="Rhea" id="RHEA:42532"/>
        <dbReference type="Rhea" id="RHEA-COMP:10101"/>
        <dbReference type="Rhea" id="RHEA-COMP:10102"/>
        <dbReference type="ChEBI" id="CHEBI:65314"/>
        <dbReference type="ChEBI" id="CHEBI:65315"/>
        <dbReference type="EC" id="5.4.99.25"/>
    </reaction>
</comment>
<comment type="similarity">
    <text evidence="1">Belongs to the pseudouridine synthase TruB family. Type 1 subfamily.</text>
</comment>
<keyword id="KW-0413">Isomerase</keyword>
<keyword id="KW-1185">Reference proteome</keyword>
<keyword id="KW-0819">tRNA processing</keyword>
<accession>A1S464</accession>
<organism>
    <name type="scientific">Shewanella amazonensis (strain ATCC BAA-1098 / SB2B)</name>
    <dbReference type="NCBI Taxonomy" id="326297"/>
    <lineage>
        <taxon>Bacteria</taxon>
        <taxon>Pseudomonadati</taxon>
        <taxon>Pseudomonadota</taxon>
        <taxon>Gammaproteobacteria</taxon>
        <taxon>Alteromonadales</taxon>
        <taxon>Shewanellaceae</taxon>
        <taxon>Shewanella</taxon>
    </lineage>
</organism>
<name>TRUB_SHEAM</name>